<reference key="1">
    <citation type="book" date="1971" name="Developpements recents dans l'etude chimique de la structure des proteines">
        <editorList>
            <person name="Preverio A."/>
            <person name="Pechere J.-F."/>
            <person name="Coletti-preverio M.-A."/>
        </editorList>
        <authorList>
            <person name="Ambler R.P."/>
        </authorList>
    </citation>
    <scope>PROTEIN SEQUENCE</scope>
    <source>
        <strain>ATCC 13867 / DSM 1650 / CIP 104375 / JCM 20650 / NBRC 13302 / NCIMB 9496 / 926</strain>
    </source>
</reference>
<proteinExistence type="evidence at protein level"/>
<name>AZUR_PSEDE</name>
<feature type="chain" id="PRO_0000085547" description="Azurin">
    <location>
        <begin position="1"/>
        <end position="128"/>
    </location>
</feature>
<feature type="domain" description="Plastocyanin-like">
    <location>
        <begin position="1"/>
        <end position="128"/>
    </location>
</feature>
<feature type="binding site" evidence="1">
    <location>
        <position position="46"/>
    </location>
    <ligand>
        <name>Cu cation</name>
        <dbReference type="ChEBI" id="CHEBI:23378"/>
    </ligand>
</feature>
<feature type="binding site" evidence="1">
    <location>
        <position position="112"/>
    </location>
    <ligand>
        <name>Cu cation</name>
        <dbReference type="ChEBI" id="CHEBI:23378"/>
    </ligand>
</feature>
<feature type="binding site" evidence="1">
    <location>
        <position position="117"/>
    </location>
    <ligand>
        <name>Cu cation</name>
        <dbReference type="ChEBI" id="CHEBI:23378"/>
    </ligand>
</feature>
<feature type="binding site" evidence="1">
    <location>
        <position position="121"/>
    </location>
    <ligand>
        <name>Cu cation</name>
        <dbReference type="ChEBI" id="CHEBI:23378"/>
    </ligand>
</feature>
<feature type="unsure residue" description="Assigned by comparison with orthologs">
    <location>
        <position position="57"/>
    </location>
</feature>
<feature type="unsure residue" description="Assigned by comparison with orthologs">
    <location>
        <position position="62"/>
    </location>
</feature>
<sequence length="128" mass="13620">AECSVDIQGNDQMQFSTNAITVDKACKTFTVNLSHPGSLPKNVMGHNWVLTTAADMQGVVTDGMAAGLDKNYVKDGDTRVIAHTKIIGSGEKDSVTFDVSKLKAGDAYAFFCSFPGHSAMMKGTLTLK</sequence>
<accession>P00283</accession>
<keyword id="KW-0186">Copper</keyword>
<keyword id="KW-0903">Direct protein sequencing</keyword>
<keyword id="KW-0249">Electron transport</keyword>
<keyword id="KW-0479">Metal-binding</keyword>
<keyword id="KW-0574">Periplasm</keyword>
<keyword id="KW-0813">Transport</keyword>
<evidence type="ECO:0000250" key="1"/>
<dbReference type="PIR" id="A00289">
    <property type="entry name" value="AZPSCD"/>
</dbReference>
<dbReference type="SMR" id="P00283"/>
<dbReference type="GO" id="GO:0042597">
    <property type="term" value="C:periplasmic space"/>
    <property type="evidence" value="ECO:0007669"/>
    <property type="project" value="UniProtKB-SubCell"/>
</dbReference>
<dbReference type="GO" id="GO:0005507">
    <property type="term" value="F:copper ion binding"/>
    <property type="evidence" value="ECO:0007669"/>
    <property type="project" value="InterPro"/>
</dbReference>
<dbReference type="GO" id="GO:0009055">
    <property type="term" value="F:electron transfer activity"/>
    <property type="evidence" value="ECO:0007669"/>
    <property type="project" value="InterPro"/>
</dbReference>
<dbReference type="CDD" id="cd13922">
    <property type="entry name" value="Azurin"/>
    <property type="match status" value="1"/>
</dbReference>
<dbReference type="FunFam" id="2.60.40.420:FF:000040">
    <property type="entry name" value="Azurin"/>
    <property type="match status" value="1"/>
</dbReference>
<dbReference type="Gene3D" id="2.60.40.420">
    <property type="entry name" value="Cupredoxins - blue copper proteins"/>
    <property type="match status" value="1"/>
</dbReference>
<dbReference type="InterPro" id="IPR014068">
    <property type="entry name" value="Azurin"/>
</dbReference>
<dbReference type="InterPro" id="IPR000923">
    <property type="entry name" value="BlueCu_1"/>
</dbReference>
<dbReference type="InterPro" id="IPR028871">
    <property type="entry name" value="BlueCu_1_BS"/>
</dbReference>
<dbReference type="InterPro" id="IPR050845">
    <property type="entry name" value="Cu-binding_ET"/>
</dbReference>
<dbReference type="InterPro" id="IPR008972">
    <property type="entry name" value="Cupredoxin"/>
</dbReference>
<dbReference type="NCBIfam" id="TIGR02695">
    <property type="entry name" value="azurin"/>
    <property type="match status" value="1"/>
</dbReference>
<dbReference type="PANTHER" id="PTHR38439">
    <property type="entry name" value="AURACYANIN-B"/>
    <property type="match status" value="1"/>
</dbReference>
<dbReference type="PANTHER" id="PTHR38439:SF2">
    <property type="entry name" value="OUTER MEMBRANE PROTEIN H.8"/>
    <property type="match status" value="1"/>
</dbReference>
<dbReference type="Pfam" id="PF00127">
    <property type="entry name" value="Copper-bind"/>
    <property type="match status" value="1"/>
</dbReference>
<dbReference type="SUPFAM" id="SSF49503">
    <property type="entry name" value="Cupredoxins"/>
    <property type="match status" value="1"/>
</dbReference>
<dbReference type="PROSITE" id="PS00196">
    <property type="entry name" value="COPPER_BLUE"/>
    <property type="match status" value="1"/>
</dbReference>
<organism>
    <name type="scientific">Pseudomonas denitrificans</name>
    <dbReference type="NCBI Taxonomy" id="43306"/>
    <lineage>
        <taxon>Bacteria</taxon>
        <taxon>Pseudomonadati</taxon>
        <taxon>Pseudomonadota</taxon>
        <taxon>Gammaproteobacteria</taxon>
        <taxon>Pseudomonadales</taxon>
        <taxon>Pseudomonadaceae</taxon>
        <taxon>Halopseudomonas</taxon>
    </lineage>
</organism>
<comment type="function">
    <text>Transfers electrons from cytochrome c551 to cytochrome oxidase.</text>
</comment>
<comment type="subcellular location">
    <subcellularLocation>
        <location>Periplasm</location>
    </subcellularLocation>
</comment>
<protein>
    <recommendedName>
        <fullName>Azurin</fullName>
    </recommendedName>
</protein>